<gene>
    <name evidence="1" type="primary">rplX</name>
    <name type="ordered locus">APJL_1806</name>
</gene>
<proteinExistence type="inferred from homology"/>
<evidence type="ECO:0000255" key="1">
    <source>
        <dbReference type="HAMAP-Rule" id="MF_01326"/>
    </source>
</evidence>
<evidence type="ECO:0000305" key="2"/>
<reference key="1">
    <citation type="journal article" date="2008" name="PLoS ONE">
        <title>Genome biology of Actinobacillus pleuropneumoniae JL03, an isolate of serotype 3 prevalent in China.</title>
        <authorList>
            <person name="Xu Z."/>
            <person name="Zhou Y."/>
            <person name="Li L."/>
            <person name="Zhou R."/>
            <person name="Xiao S."/>
            <person name="Wan Y."/>
            <person name="Zhang S."/>
            <person name="Wang K."/>
            <person name="Li W."/>
            <person name="Li L."/>
            <person name="Jin H."/>
            <person name="Kang M."/>
            <person name="Dalai B."/>
            <person name="Li T."/>
            <person name="Liu L."/>
            <person name="Cheng Y."/>
            <person name="Zhang L."/>
            <person name="Xu T."/>
            <person name="Zheng H."/>
            <person name="Pu S."/>
            <person name="Wang B."/>
            <person name="Gu W."/>
            <person name="Zhang X.L."/>
            <person name="Zhu G.-F."/>
            <person name="Wang S."/>
            <person name="Zhao G.-P."/>
            <person name="Chen H."/>
        </authorList>
    </citation>
    <scope>NUCLEOTIDE SEQUENCE [LARGE SCALE GENOMIC DNA]</scope>
    <source>
        <strain>JL03</strain>
    </source>
</reference>
<dbReference type="EMBL" id="CP000687">
    <property type="protein sequence ID" value="ABY70356.1"/>
    <property type="molecule type" value="Genomic_DNA"/>
</dbReference>
<dbReference type="RefSeq" id="WP_012263387.1">
    <property type="nucleotide sequence ID" value="NC_010278.1"/>
</dbReference>
<dbReference type="SMR" id="B0BSU2"/>
<dbReference type="KEGG" id="apj:APJL_1806"/>
<dbReference type="HOGENOM" id="CLU_093315_2_2_6"/>
<dbReference type="Proteomes" id="UP000008547">
    <property type="component" value="Chromosome"/>
</dbReference>
<dbReference type="GO" id="GO:1990904">
    <property type="term" value="C:ribonucleoprotein complex"/>
    <property type="evidence" value="ECO:0007669"/>
    <property type="project" value="UniProtKB-KW"/>
</dbReference>
<dbReference type="GO" id="GO:0005840">
    <property type="term" value="C:ribosome"/>
    <property type="evidence" value="ECO:0007669"/>
    <property type="project" value="UniProtKB-KW"/>
</dbReference>
<dbReference type="GO" id="GO:0019843">
    <property type="term" value="F:rRNA binding"/>
    <property type="evidence" value="ECO:0007669"/>
    <property type="project" value="UniProtKB-UniRule"/>
</dbReference>
<dbReference type="GO" id="GO:0003735">
    <property type="term" value="F:structural constituent of ribosome"/>
    <property type="evidence" value="ECO:0007669"/>
    <property type="project" value="InterPro"/>
</dbReference>
<dbReference type="GO" id="GO:0006412">
    <property type="term" value="P:translation"/>
    <property type="evidence" value="ECO:0007669"/>
    <property type="project" value="UniProtKB-UniRule"/>
</dbReference>
<dbReference type="CDD" id="cd06089">
    <property type="entry name" value="KOW_RPL26"/>
    <property type="match status" value="1"/>
</dbReference>
<dbReference type="FunFam" id="2.30.30.30:FF:000004">
    <property type="entry name" value="50S ribosomal protein L24"/>
    <property type="match status" value="1"/>
</dbReference>
<dbReference type="Gene3D" id="2.30.30.30">
    <property type="match status" value="1"/>
</dbReference>
<dbReference type="HAMAP" id="MF_01326_B">
    <property type="entry name" value="Ribosomal_uL24_B"/>
    <property type="match status" value="1"/>
</dbReference>
<dbReference type="InterPro" id="IPR005824">
    <property type="entry name" value="KOW"/>
</dbReference>
<dbReference type="InterPro" id="IPR014722">
    <property type="entry name" value="Rib_uL2_dom2"/>
</dbReference>
<dbReference type="InterPro" id="IPR003256">
    <property type="entry name" value="Ribosomal_uL24"/>
</dbReference>
<dbReference type="InterPro" id="IPR005825">
    <property type="entry name" value="Ribosomal_uL24_CS"/>
</dbReference>
<dbReference type="InterPro" id="IPR041988">
    <property type="entry name" value="Ribosomal_uL24_KOW"/>
</dbReference>
<dbReference type="InterPro" id="IPR008991">
    <property type="entry name" value="Translation_prot_SH3-like_sf"/>
</dbReference>
<dbReference type="NCBIfam" id="TIGR01079">
    <property type="entry name" value="rplX_bact"/>
    <property type="match status" value="1"/>
</dbReference>
<dbReference type="PANTHER" id="PTHR12903">
    <property type="entry name" value="MITOCHONDRIAL RIBOSOMAL PROTEIN L24"/>
    <property type="match status" value="1"/>
</dbReference>
<dbReference type="Pfam" id="PF00467">
    <property type="entry name" value="KOW"/>
    <property type="match status" value="1"/>
</dbReference>
<dbReference type="Pfam" id="PF17136">
    <property type="entry name" value="ribosomal_L24"/>
    <property type="match status" value="1"/>
</dbReference>
<dbReference type="SMART" id="SM00739">
    <property type="entry name" value="KOW"/>
    <property type="match status" value="1"/>
</dbReference>
<dbReference type="SUPFAM" id="SSF50104">
    <property type="entry name" value="Translation proteins SH3-like domain"/>
    <property type="match status" value="1"/>
</dbReference>
<dbReference type="PROSITE" id="PS01108">
    <property type="entry name" value="RIBOSOMAL_L24"/>
    <property type="match status" value="1"/>
</dbReference>
<organism>
    <name type="scientific">Actinobacillus pleuropneumoniae serotype 3 (strain JL03)</name>
    <dbReference type="NCBI Taxonomy" id="434271"/>
    <lineage>
        <taxon>Bacteria</taxon>
        <taxon>Pseudomonadati</taxon>
        <taxon>Pseudomonadota</taxon>
        <taxon>Gammaproteobacteria</taxon>
        <taxon>Pasteurellales</taxon>
        <taxon>Pasteurellaceae</taxon>
        <taxon>Actinobacillus</taxon>
    </lineage>
</organism>
<name>RL24_ACTPJ</name>
<comment type="function">
    <text evidence="1">One of two assembly initiator proteins, it binds directly to the 5'-end of the 23S rRNA, where it nucleates assembly of the 50S subunit.</text>
</comment>
<comment type="function">
    <text evidence="1">One of the proteins that surrounds the polypeptide exit tunnel on the outside of the subunit.</text>
</comment>
<comment type="subunit">
    <text evidence="1">Part of the 50S ribosomal subunit.</text>
</comment>
<comment type="similarity">
    <text evidence="1">Belongs to the universal ribosomal protein uL24 family.</text>
</comment>
<feature type="chain" id="PRO_1000141954" description="Large ribosomal subunit protein uL24">
    <location>
        <begin position="1"/>
        <end position="103"/>
    </location>
</feature>
<keyword id="KW-0687">Ribonucleoprotein</keyword>
<keyword id="KW-0689">Ribosomal protein</keyword>
<keyword id="KW-0694">RNA-binding</keyword>
<keyword id="KW-0699">rRNA-binding</keyword>
<sequence>MAAKIRQNDEVIVLTGKDKGKRGKVTQMLPNGKVIVEGVKIITKHEKPVPALGKAGGLVKKEAAIDASNIAIFNPKTNKADRVGFRFEDGKKVRFFKSNNEII</sequence>
<accession>B0BSU2</accession>
<protein>
    <recommendedName>
        <fullName evidence="1">Large ribosomal subunit protein uL24</fullName>
    </recommendedName>
    <alternativeName>
        <fullName evidence="2">50S ribosomal protein L24</fullName>
    </alternativeName>
</protein>